<organism>
    <name type="scientific">Doryteuthis pealeii</name>
    <name type="common">Longfin inshore squid</name>
    <name type="synonym">Loligo pealeii</name>
    <dbReference type="NCBI Taxonomy" id="1051067"/>
    <lineage>
        <taxon>Eukaryota</taxon>
        <taxon>Metazoa</taxon>
        <taxon>Spiralia</taxon>
        <taxon>Lophotrochozoa</taxon>
        <taxon>Mollusca</taxon>
        <taxon>Cephalopoda</taxon>
        <taxon>Coleoidea</taxon>
        <taxon>Decapodiformes</taxon>
        <taxon>Myopsida</taxon>
        <taxon>Loliginidae</taxon>
        <taxon>Doryteuthis</taxon>
    </lineage>
</organism>
<reference key="1">
    <citation type="journal article" date="1991" name="J. Biol. Chem.">
        <title>Squid low molecular weight neurofilament proteins are a novel class of neurofilament protein. A nuclear lamin-like core and multiple distinct proteins formed by alternative RNA processing.</title>
        <authorList>
            <person name="Szaro B.G."/>
            <person name="Pant H.C."/>
            <person name="Way J."/>
            <person name="Battey J."/>
        </authorList>
    </citation>
    <scope>NUCLEOTIDE SEQUENCE [MRNA]</scope>
    <source>
        <tissue>Brain</tissue>
    </source>
</reference>
<comment type="function">
    <text>Major squid neurofilament protein.</text>
</comment>
<comment type="alternative products">
    <event type="alternative splicing"/>
    <isoform>
        <id>Q01240-1</id>
        <name>NF60</name>
        <sequence type="displayed"/>
    </isoform>
    <isoform>
        <id>Q01241-1</id>
        <name>NF70</name>
        <sequence type="external"/>
    </isoform>
</comment>
<comment type="similarity">
    <text evidence="1">Belongs to the intermediate filament family.</text>
</comment>
<feature type="chain" id="PRO_0000063855" description="60 kDa neurofilament protein">
    <location>
        <begin position="1"/>
        <end position="511"/>
    </location>
</feature>
<feature type="domain" description="IF rod" evidence="1">
    <location>
        <begin position="96"/>
        <end position="449"/>
    </location>
</feature>
<feature type="region of interest" description="Head">
    <location>
        <begin position="1"/>
        <end position="99"/>
    </location>
</feature>
<feature type="region of interest" description="Disordered" evidence="2">
    <location>
        <begin position="1"/>
        <end position="32"/>
    </location>
</feature>
<feature type="region of interest" description="Coil 1A">
    <location>
        <begin position="100"/>
        <end position="135"/>
    </location>
</feature>
<feature type="region of interest" description="Linker 1">
    <location>
        <begin position="136"/>
        <end position="145"/>
    </location>
</feature>
<feature type="region of interest" description="Coil 1B">
    <location>
        <begin position="146"/>
        <end position="284"/>
    </location>
</feature>
<feature type="region of interest" description="Linker 12">
    <location>
        <begin position="285"/>
        <end position="303"/>
    </location>
</feature>
<feature type="region of interest" description="Coil 2">
    <location>
        <begin position="304"/>
        <end position="449"/>
    </location>
</feature>
<feature type="region of interest" description="Tail">
    <location>
        <begin position="450"/>
        <end position="511"/>
    </location>
</feature>
<feature type="region of interest" description="Disordered" evidence="2">
    <location>
        <begin position="479"/>
        <end position="511"/>
    </location>
</feature>
<feature type="compositionally biased region" description="Polar residues" evidence="2">
    <location>
        <begin position="21"/>
        <end position="30"/>
    </location>
</feature>
<feature type="compositionally biased region" description="Low complexity" evidence="2">
    <location>
        <begin position="483"/>
        <end position="492"/>
    </location>
</feature>
<feature type="compositionally biased region" description="Basic and acidic residues" evidence="2">
    <location>
        <begin position="495"/>
        <end position="511"/>
    </location>
</feature>
<name>NF60_DORPE</name>
<protein>
    <recommendedName>
        <fullName>60 kDa neurofilament protein</fullName>
        <shortName>NF60</shortName>
    </recommendedName>
</protein>
<keyword id="KW-0025">Alternative splicing</keyword>
<keyword id="KW-0175">Coiled coil</keyword>
<keyword id="KW-0403">Intermediate filament</keyword>
<accession>Q01240</accession>
<sequence length="511" mass="59161">MSVTQKKTEISTTTTYEGESRPSSGMSGFSYSAKIHPRTSGYINRSSQSPFRSSMGSNAAYTRSYDFSYGATAMPGRYANISSTGVNHVKANREREKQDMRDLNERFANYIEKVRFLEAQNKKLAGELEELKSKWGKETSAIKEMYETELEEARKLIDATNKEKITLDVRVTELIDQLERQQKDLEESRTYHQIDQEQIARQNQQLADLEGEISMLRRSIESLEKEKMRQSNILAKMNDEMEKMRMDLNNETINHLDAENRRQTLEEELEFQKDVHAQELKELAALAYRDTTAENREFWRNELAQAIRDIQQEYDAKCDQMRGDIEAYYNLKVQEFRTGATKQNMEVTRNKEENTKLKSNMTEIRNRLADLEARNAQLERTNQDLLRDLEEKDRQNELESCQYKEEITKLRGEMESILKELQDLMDIKLSLELEIAAYRKLLEGEESRVGMKQIVEQVVGARPNEAEVLSTILTRSEGGYEATGGITTTTTTSSQERRSMSEEKKSMGSSD</sequence>
<dbReference type="EMBL" id="M64717">
    <property type="protein sequence ID" value="AAA29992.1"/>
    <property type="molecule type" value="mRNA"/>
</dbReference>
<dbReference type="PIR" id="A39340">
    <property type="entry name" value="A39340"/>
</dbReference>
<dbReference type="SMR" id="Q01240"/>
<dbReference type="GO" id="GO:0005882">
    <property type="term" value="C:intermediate filament"/>
    <property type="evidence" value="ECO:0007669"/>
    <property type="project" value="UniProtKB-KW"/>
</dbReference>
<dbReference type="GO" id="GO:0005635">
    <property type="term" value="C:nuclear envelope"/>
    <property type="evidence" value="ECO:0007669"/>
    <property type="project" value="TreeGrafter"/>
</dbReference>
<dbReference type="GO" id="GO:0005652">
    <property type="term" value="C:nuclear lamina"/>
    <property type="evidence" value="ECO:0007669"/>
    <property type="project" value="TreeGrafter"/>
</dbReference>
<dbReference type="GO" id="GO:0005200">
    <property type="term" value="F:structural constituent of cytoskeleton"/>
    <property type="evidence" value="ECO:0007669"/>
    <property type="project" value="TreeGrafter"/>
</dbReference>
<dbReference type="GO" id="GO:0031507">
    <property type="term" value="P:heterochromatin formation"/>
    <property type="evidence" value="ECO:0007669"/>
    <property type="project" value="TreeGrafter"/>
</dbReference>
<dbReference type="GO" id="GO:0006998">
    <property type="term" value="P:nuclear envelope organization"/>
    <property type="evidence" value="ECO:0007669"/>
    <property type="project" value="TreeGrafter"/>
</dbReference>
<dbReference type="GO" id="GO:0007097">
    <property type="term" value="P:nuclear migration"/>
    <property type="evidence" value="ECO:0007669"/>
    <property type="project" value="TreeGrafter"/>
</dbReference>
<dbReference type="GO" id="GO:0051664">
    <property type="term" value="P:nuclear pore localization"/>
    <property type="evidence" value="ECO:0007669"/>
    <property type="project" value="TreeGrafter"/>
</dbReference>
<dbReference type="GO" id="GO:0090435">
    <property type="term" value="P:protein localization to nuclear envelope"/>
    <property type="evidence" value="ECO:0007669"/>
    <property type="project" value="TreeGrafter"/>
</dbReference>
<dbReference type="Gene3D" id="1.20.5.170">
    <property type="match status" value="1"/>
</dbReference>
<dbReference type="Gene3D" id="1.20.5.500">
    <property type="entry name" value="Single helix bin"/>
    <property type="match status" value="1"/>
</dbReference>
<dbReference type="Gene3D" id="1.20.5.1160">
    <property type="entry name" value="Vasodilator-stimulated phosphoprotein"/>
    <property type="match status" value="2"/>
</dbReference>
<dbReference type="InterPro" id="IPR018039">
    <property type="entry name" value="IF_conserved"/>
</dbReference>
<dbReference type="InterPro" id="IPR039008">
    <property type="entry name" value="IF_rod_dom"/>
</dbReference>
<dbReference type="InterPro" id="IPR016451">
    <property type="entry name" value="Intermed_filament_ifa/ifb"/>
</dbReference>
<dbReference type="PANTHER" id="PTHR45721:SF12">
    <property type="entry name" value="INTERMEDIATE FILAMENT PROTEIN IFA-1"/>
    <property type="match status" value="1"/>
</dbReference>
<dbReference type="PANTHER" id="PTHR45721">
    <property type="entry name" value="LAMIN DM0-RELATED"/>
    <property type="match status" value="1"/>
</dbReference>
<dbReference type="Pfam" id="PF00038">
    <property type="entry name" value="Filament"/>
    <property type="match status" value="1"/>
</dbReference>
<dbReference type="PIRSF" id="PIRSF005546">
    <property type="entry name" value="Intermed_filamnt_Ifb-2"/>
    <property type="match status" value="1"/>
</dbReference>
<dbReference type="SMART" id="SM01391">
    <property type="entry name" value="Filament"/>
    <property type="match status" value="1"/>
</dbReference>
<dbReference type="SUPFAM" id="SSF64593">
    <property type="entry name" value="Intermediate filament protein, coiled coil region"/>
    <property type="match status" value="2"/>
</dbReference>
<dbReference type="PROSITE" id="PS00226">
    <property type="entry name" value="IF_ROD_1"/>
    <property type="match status" value="1"/>
</dbReference>
<dbReference type="PROSITE" id="PS51842">
    <property type="entry name" value="IF_ROD_2"/>
    <property type="match status" value="1"/>
</dbReference>
<evidence type="ECO:0000255" key="1">
    <source>
        <dbReference type="PROSITE-ProRule" id="PRU01188"/>
    </source>
</evidence>
<evidence type="ECO:0000256" key="2">
    <source>
        <dbReference type="SAM" id="MobiDB-lite"/>
    </source>
</evidence>
<proteinExistence type="evidence at transcript level"/>